<proteinExistence type="evidence at transcript level"/>
<feature type="initiator methionine" description="Removed" evidence="1">
    <location>
        <position position="1"/>
    </location>
</feature>
<feature type="chain" id="PRO_0000324765" description="Asparagine synthetase domain-containing protein CG17486">
    <location>
        <begin position="2"/>
        <end position="564"/>
    </location>
</feature>
<feature type="domain" description="Glutamine amidotransferase type-2">
    <location>
        <begin position="2"/>
        <end position="180"/>
    </location>
</feature>
<feature type="domain" description="Asparagine synthetase">
    <location>
        <begin position="280"/>
        <end position="541"/>
    </location>
</feature>
<feature type="active site" description="Nucleophile" evidence="1">
    <location>
        <position position="2"/>
    </location>
</feature>
<reference key="1">
    <citation type="journal article" date="2000" name="Science">
        <title>The genome sequence of Drosophila melanogaster.</title>
        <authorList>
            <person name="Adams M.D."/>
            <person name="Celniker S.E."/>
            <person name="Holt R.A."/>
            <person name="Evans C.A."/>
            <person name="Gocayne J.D."/>
            <person name="Amanatides P.G."/>
            <person name="Scherer S.E."/>
            <person name="Li P.W."/>
            <person name="Hoskins R.A."/>
            <person name="Galle R.F."/>
            <person name="George R.A."/>
            <person name="Lewis S.E."/>
            <person name="Richards S."/>
            <person name="Ashburner M."/>
            <person name="Henderson S.N."/>
            <person name="Sutton G.G."/>
            <person name="Wortman J.R."/>
            <person name="Yandell M.D."/>
            <person name="Zhang Q."/>
            <person name="Chen L.X."/>
            <person name="Brandon R.C."/>
            <person name="Rogers Y.-H.C."/>
            <person name="Blazej R.G."/>
            <person name="Champe M."/>
            <person name="Pfeiffer B.D."/>
            <person name="Wan K.H."/>
            <person name="Doyle C."/>
            <person name="Baxter E.G."/>
            <person name="Helt G."/>
            <person name="Nelson C.R."/>
            <person name="Miklos G.L.G."/>
            <person name="Abril J.F."/>
            <person name="Agbayani A."/>
            <person name="An H.-J."/>
            <person name="Andrews-Pfannkoch C."/>
            <person name="Baldwin D."/>
            <person name="Ballew R.M."/>
            <person name="Basu A."/>
            <person name="Baxendale J."/>
            <person name="Bayraktaroglu L."/>
            <person name="Beasley E.M."/>
            <person name="Beeson K.Y."/>
            <person name="Benos P.V."/>
            <person name="Berman B.P."/>
            <person name="Bhandari D."/>
            <person name="Bolshakov S."/>
            <person name="Borkova D."/>
            <person name="Botchan M.R."/>
            <person name="Bouck J."/>
            <person name="Brokstein P."/>
            <person name="Brottier P."/>
            <person name="Burtis K.C."/>
            <person name="Busam D.A."/>
            <person name="Butler H."/>
            <person name="Cadieu E."/>
            <person name="Center A."/>
            <person name="Chandra I."/>
            <person name="Cherry J.M."/>
            <person name="Cawley S."/>
            <person name="Dahlke C."/>
            <person name="Davenport L.B."/>
            <person name="Davies P."/>
            <person name="de Pablos B."/>
            <person name="Delcher A."/>
            <person name="Deng Z."/>
            <person name="Mays A.D."/>
            <person name="Dew I."/>
            <person name="Dietz S.M."/>
            <person name="Dodson K."/>
            <person name="Doup L.E."/>
            <person name="Downes M."/>
            <person name="Dugan-Rocha S."/>
            <person name="Dunkov B.C."/>
            <person name="Dunn P."/>
            <person name="Durbin K.J."/>
            <person name="Evangelista C.C."/>
            <person name="Ferraz C."/>
            <person name="Ferriera S."/>
            <person name="Fleischmann W."/>
            <person name="Fosler C."/>
            <person name="Gabrielian A.E."/>
            <person name="Garg N.S."/>
            <person name="Gelbart W.M."/>
            <person name="Glasser K."/>
            <person name="Glodek A."/>
            <person name="Gong F."/>
            <person name="Gorrell J.H."/>
            <person name="Gu Z."/>
            <person name="Guan P."/>
            <person name="Harris M."/>
            <person name="Harris N.L."/>
            <person name="Harvey D.A."/>
            <person name="Heiman T.J."/>
            <person name="Hernandez J.R."/>
            <person name="Houck J."/>
            <person name="Hostin D."/>
            <person name="Houston K.A."/>
            <person name="Howland T.J."/>
            <person name="Wei M.-H."/>
            <person name="Ibegwam C."/>
            <person name="Jalali M."/>
            <person name="Kalush F."/>
            <person name="Karpen G.H."/>
            <person name="Ke Z."/>
            <person name="Kennison J.A."/>
            <person name="Ketchum K.A."/>
            <person name="Kimmel B.E."/>
            <person name="Kodira C.D."/>
            <person name="Kraft C.L."/>
            <person name="Kravitz S."/>
            <person name="Kulp D."/>
            <person name="Lai Z."/>
            <person name="Lasko P."/>
            <person name="Lei Y."/>
            <person name="Levitsky A.A."/>
            <person name="Li J.H."/>
            <person name="Li Z."/>
            <person name="Liang Y."/>
            <person name="Lin X."/>
            <person name="Liu X."/>
            <person name="Mattei B."/>
            <person name="McIntosh T.C."/>
            <person name="McLeod M.P."/>
            <person name="McPherson D."/>
            <person name="Merkulov G."/>
            <person name="Milshina N.V."/>
            <person name="Mobarry C."/>
            <person name="Morris J."/>
            <person name="Moshrefi A."/>
            <person name="Mount S.M."/>
            <person name="Moy M."/>
            <person name="Murphy B."/>
            <person name="Murphy L."/>
            <person name="Muzny D.M."/>
            <person name="Nelson D.L."/>
            <person name="Nelson D.R."/>
            <person name="Nelson K.A."/>
            <person name="Nixon K."/>
            <person name="Nusskern D.R."/>
            <person name="Pacleb J.M."/>
            <person name="Palazzolo M."/>
            <person name="Pittman G.S."/>
            <person name="Pan S."/>
            <person name="Pollard J."/>
            <person name="Puri V."/>
            <person name="Reese M.G."/>
            <person name="Reinert K."/>
            <person name="Remington K."/>
            <person name="Saunders R.D.C."/>
            <person name="Scheeler F."/>
            <person name="Shen H."/>
            <person name="Shue B.C."/>
            <person name="Siden-Kiamos I."/>
            <person name="Simpson M."/>
            <person name="Skupski M.P."/>
            <person name="Smith T.J."/>
            <person name="Spier E."/>
            <person name="Spradling A.C."/>
            <person name="Stapleton M."/>
            <person name="Strong R."/>
            <person name="Sun E."/>
            <person name="Svirskas R."/>
            <person name="Tector C."/>
            <person name="Turner R."/>
            <person name="Venter E."/>
            <person name="Wang A.H."/>
            <person name="Wang X."/>
            <person name="Wang Z.-Y."/>
            <person name="Wassarman D.A."/>
            <person name="Weinstock G.M."/>
            <person name="Weissenbach J."/>
            <person name="Williams S.M."/>
            <person name="Woodage T."/>
            <person name="Worley K.C."/>
            <person name="Wu D."/>
            <person name="Yang S."/>
            <person name="Yao Q.A."/>
            <person name="Ye J."/>
            <person name="Yeh R.-F."/>
            <person name="Zaveri J.S."/>
            <person name="Zhan M."/>
            <person name="Zhang G."/>
            <person name="Zhao Q."/>
            <person name="Zheng L."/>
            <person name="Zheng X.H."/>
            <person name="Zhong F.N."/>
            <person name="Zhong W."/>
            <person name="Zhou X."/>
            <person name="Zhu S.C."/>
            <person name="Zhu X."/>
            <person name="Smith H.O."/>
            <person name="Gibbs R.A."/>
            <person name="Myers E.W."/>
            <person name="Rubin G.M."/>
            <person name="Venter J.C."/>
        </authorList>
    </citation>
    <scope>NUCLEOTIDE SEQUENCE [LARGE SCALE GENOMIC DNA]</scope>
    <source>
        <strain>Berkeley</strain>
    </source>
</reference>
<reference key="2">
    <citation type="journal article" date="2002" name="Genome Biol.">
        <title>Annotation of the Drosophila melanogaster euchromatic genome: a systematic review.</title>
        <authorList>
            <person name="Misra S."/>
            <person name="Crosby M.A."/>
            <person name="Mungall C.J."/>
            <person name="Matthews B.B."/>
            <person name="Campbell K.S."/>
            <person name="Hradecky P."/>
            <person name="Huang Y."/>
            <person name="Kaminker J.S."/>
            <person name="Millburn G.H."/>
            <person name="Prochnik S.E."/>
            <person name="Smith C.D."/>
            <person name="Tupy J.L."/>
            <person name="Whitfield E.J."/>
            <person name="Bayraktaroglu L."/>
            <person name="Berman B.P."/>
            <person name="Bettencourt B.R."/>
            <person name="Celniker S.E."/>
            <person name="de Grey A.D.N.J."/>
            <person name="Drysdale R.A."/>
            <person name="Harris N.L."/>
            <person name="Richter J."/>
            <person name="Russo S."/>
            <person name="Schroeder A.J."/>
            <person name="Shu S.Q."/>
            <person name="Stapleton M."/>
            <person name="Yamada C."/>
            <person name="Ashburner M."/>
            <person name="Gelbart W.M."/>
            <person name="Rubin G.M."/>
            <person name="Lewis S.E."/>
        </authorList>
    </citation>
    <scope>GENOME REANNOTATION</scope>
    <source>
        <strain>Berkeley</strain>
    </source>
</reference>
<reference key="3">
    <citation type="journal article" date="2002" name="Genome Biol.">
        <title>A Drosophila full-length cDNA resource.</title>
        <authorList>
            <person name="Stapleton M."/>
            <person name="Carlson J.W."/>
            <person name="Brokstein P."/>
            <person name="Yu C."/>
            <person name="Champe M."/>
            <person name="George R.A."/>
            <person name="Guarin H."/>
            <person name="Kronmiller B."/>
            <person name="Pacleb J.M."/>
            <person name="Park S."/>
            <person name="Wan K.H."/>
            <person name="Rubin G.M."/>
            <person name="Celniker S.E."/>
        </authorList>
    </citation>
    <scope>NUCLEOTIDE SEQUENCE [LARGE SCALE MRNA]</scope>
    <source>
        <strain>Berkeley</strain>
        <tissue>Embryo</tissue>
    </source>
</reference>
<gene>
    <name type="ORF">CG17486</name>
</gene>
<protein>
    <recommendedName>
        <fullName>Asparagine synthetase domain-containing protein CG17486</fullName>
    </recommendedName>
</protein>
<organism>
    <name type="scientific">Drosophila melanogaster</name>
    <name type="common">Fruit fly</name>
    <dbReference type="NCBI Taxonomy" id="7227"/>
    <lineage>
        <taxon>Eukaryota</taxon>
        <taxon>Metazoa</taxon>
        <taxon>Ecdysozoa</taxon>
        <taxon>Arthropoda</taxon>
        <taxon>Hexapoda</taxon>
        <taxon>Insecta</taxon>
        <taxon>Pterygota</taxon>
        <taxon>Neoptera</taxon>
        <taxon>Endopterygota</taxon>
        <taxon>Diptera</taxon>
        <taxon>Brachycera</taxon>
        <taxon>Muscomorpha</taxon>
        <taxon>Ephydroidea</taxon>
        <taxon>Drosophilidae</taxon>
        <taxon>Drosophila</taxon>
        <taxon>Sophophora</taxon>
    </lineage>
</organism>
<sequence length="564" mass="64746">MCGIFCSVVNNVPLNSFNISSALKVILKNRGPDVQDEVVIDYCFGKILFAGFVLWQQGESVQKQPVVEDDFIFLFNGDIYNTSKPEYMSDTTWIAERLAECRCKEQNILKILKRLEGPHCLIIYDKREQILYFSRDALGRNSLLIERICNGFQLLSTSHFEDKKISLELPPLGLFRVKLNDLNSCVLYPWQPLNNYSTQLLRNLDLAIGWKTAVESPMSPDWMLNCNPAFSYNFYEFQYIKNNVNLYKNLIDQSEIKYTLSILHTLLSDSIKNRVRNMAPFCRLCMQKLNISPPCRHAKLCILFSGGLDCTILALLANQFVPVNEPIELINVAFESVKGQNISEKLFDVPDRKTSLVSVNELKQLCPERCWNLLKVNVTRLELQQHLTSRIKHLIYPLDTVLDESLGCAFWFASHCTHSTARVALIGSGADELFGGYTRYRNSYSRCLGNDLERQLAVQNELERDWQRISARNLARDDRIIADTGKTARSPFIEENFVKFIRSLEVYQKCCFGFPEGVGDKLLLRLYGYQIGLRDVVFLKKRAIQFGSRIANKKQNGSHQSDNL</sequence>
<dbReference type="EMBL" id="AE013599">
    <property type="protein sequence ID" value="EAA45987.3"/>
    <property type="molecule type" value="Genomic_DNA"/>
</dbReference>
<dbReference type="EMBL" id="AY069456">
    <property type="protein sequence ID" value="AAL39601.1"/>
    <property type="molecule type" value="mRNA"/>
</dbReference>
<dbReference type="RefSeq" id="NP_001036446.2">
    <property type="nucleotide sequence ID" value="NM_001042981.3"/>
</dbReference>
<dbReference type="SMR" id="Q5LJP9"/>
<dbReference type="BioGRID" id="78263">
    <property type="interactions" value="1"/>
</dbReference>
<dbReference type="DIP" id="DIP-23653N"/>
<dbReference type="FunCoup" id="Q5LJP9">
    <property type="interactions" value="1387"/>
</dbReference>
<dbReference type="IntAct" id="Q5LJP9">
    <property type="interactions" value="1"/>
</dbReference>
<dbReference type="STRING" id="7227.FBpp0289202"/>
<dbReference type="PaxDb" id="7227-FBpp0289202"/>
<dbReference type="DNASU" id="3355138"/>
<dbReference type="EnsemblMetazoa" id="FBtr0299924">
    <property type="protein sequence ID" value="FBpp0289202"/>
    <property type="gene ID" value="FBgn0032997"/>
</dbReference>
<dbReference type="GeneID" id="3355138"/>
<dbReference type="KEGG" id="dme:Dmel_CG17486"/>
<dbReference type="UCSC" id="CG17486-RB">
    <property type="organism name" value="d. melanogaster"/>
</dbReference>
<dbReference type="AGR" id="FB:FBgn0032997"/>
<dbReference type="FlyBase" id="FBgn0032997">
    <property type="gene designation" value="CG17486"/>
</dbReference>
<dbReference type="VEuPathDB" id="VectorBase:FBgn0032997"/>
<dbReference type="eggNOG" id="KOG0573">
    <property type="taxonomic scope" value="Eukaryota"/>
</dbReference>
<dbReference type="GeneTree" id="ENSGT00390000012446"/>
<dbReference type="HOGENOM" id="CLU_012368_2_0_1"/>
<dbReference type="InParanoid" id="Q5LJP9"/>
<dbReference type="OMA" id="HAKICIL"/>
<dbReference type="OrthoDB" id="10252281at2759"/>
<dbReference type="PhylomeDB" id="Q5LJP9"/>
<dbReference type="BioGRID-ORCS" id="3355138">
    <property type="hits" value="1 hit in 1 CRISPR screen"/>
</dbReference>
<dbReference type="GenomeRNAi" id="3355138"/>
<dbReference type="PRO" id="PR:Q5LJP9"/>
<dbReference type="Proteomes" id="UP000000803">
    <property type="component" value="Chromosome 2R"/>
</dbReference>
<dbReference type="Bgee" id="FBgn0032997">
    <property type="expression patterns" value="Expressed in egg cell and 172 other cell types or tissues"/>
</dbReference>
<dbReference type="GO" id="GO:0004066">
    <property type="term" value="F:asparagine synthase (glutamine-hydrolyzing) activity"/>
    <property type="evidence" value="ECO:0007669"/>
    <property type="project" value="InterPro"/>
</dbReference>
<dbReference type="GO" id="GO:0006529">
    <property type="term" value="P:asparagine biosynthetic process"/>
    <property type="evidence" value="ECO:0007669"/>
    <property type="project" value="UniProtKB-KW"/>
</dbReference>
<dbReference type="CDD" id="cd01991">
    <property type="entry name" value="Asn_synthase_B_C"/>
    <property type="match status" value="1"/>
</dbReference>
<dbReference type="CDD" id="cd03766">
    <property type="entry name" value="Gn_AT_II_novel"/>
    <property type="match status" value="1"/>
</dbReference>
<dbReference type="Gene3D" id="3.60.20.10">
    <property type="entry name" value="Glutamine Phosphoribosylpyrophosphate, subunit 1, domain 1"/>
    <property type="match status" value="1"/>
</dbReference>
<dbReference type="Gene3D" id="3.40.50.620">
    <property type="entry name" value="HUPs"/>
    <property type="match status" value="1"/>
</dbReference>
<dbReference type="InterPro" id="IPR001962">
    <property type="entry name" value="Asn_synthase"/>
</dbReference>
<dbReference type="InterPro" id="IPR051857">
    <property type="entry name" value="Asn_synthetase_domain"/>
</dbReference>
<dbReference type="InterPro" id="IPR017932">
    <property type="entry name" value="GATase_2_dom"/>
</dbReference>
<dbReference type="InterPro" id="IPR029055">
    <property type="entry name" value="Ntn_hydrolases_N"/>
</dbReference>
<dbReference type="InterPro" id="IPR014729">
    <property type="entry name" value="Rossmann-like_a/b/a_fold"/>
</dbReference>
<dbReference type="PANTHER" id="PTHR45937">
    <property type="entry name" value="ASPARAGINE SYNTHETASE DOMAIN-CONTAINING PROTEIN 1"/>
    <property type="match status" value="1"/>
</dbReference>
<dbReference type="PANTHER" id="PTHR45937:SF1">
    <property type="entry name" value="ASPARAGINE SYNTHETASE DOMAIN-CONTAINING PROTEIN 1"/>
    <property type="match status" value="1"/>
</dbReference>
<dbReference type="Pfam" id="PF00733">
    <property type="entry name" value="Asn_synthase"/>
    <property type="match status" value="1"/>
</dbReference>
<dbReference type="Pfam" id="PF13537">
    <property type="entry name" value="GATase_7"/>
    <property type="match status" value="1"/>
</dbReference>
<dbReference type="SUPFAM" id="SSF52402">
    <property type="entry name" value="Adenine nucleotide alpha hydrolases-like"/>
    <property type="match status" value="1"/>
</dbReference>
<dbReference type="SUPFAM" id="SSF56235">
    <property type="entry name" value="N-terminal nucleophile aminohydrolases (Ntn hydrolases)"/>
    <property type="match status" value="1"/>
</dbReference>
<accession>Q5LJP9</accession>
<accession>Q9W5U0</accession>
<evidence type="ECO:0000250" key="1"/>
<keyword id="KW-0028">Amino-acid biosynthesis</keyword>
<keyword id="KW-0061">Asparagine biosynthesis</keyword>
<keyword id="KW-0315">Glutamine amidotransferase</keyword>
<keyword id="KW-1185">Reference proteome</keyword>
<name>ASND1_DROME</name>